<gene>
    <name evidence="1 2" type="primary">atpD</name>
</gene>
<reference key="1">
    <citation type="journal article" date="1997" name="Biochem. Biophys. Res. Commun.">
        <title>The stabilizing residues and the functional domains in the hyperthermophilic V-ATPase of Desulfurococcus.</title>
        <authorList>
            <person name="Shibui H."/>
            <person name="Hamamoto T."/>
            <person name="Yohda M."/>
            <person name="Kagawa Y."/>
        </authorList>
    </citation>
    <scope>NUCLEOTIDE SEQUENCE [GENOMIC DNA]</scope>
    <source>
        <strain>SY</strain>
    </source>
</reference>
<feature type="chain" id="PRO_0000144247" description="A-type ATP synthase subunit D">
    <location>
        <begin position="1"/>
        <end position="214"/>
    </location>
</feature>
<dbReference type="EMBL" id="U96487">
    <property type="protein sequence ID" value="AAB64418.1"/>
    <property type="molecule type" value="Genomic_DNA"/>
</dbReference>
<dbReference type="PIR" id="T44676">
    <property type="entry name" value="T44676"/>
</dbReference>
<dbReference type="SMR" id="O06506"/>
<dbReference type="GO" id="GO:0005886">
    <property type="term" value="C:plasma membrane"/>
    <property type="evidence" value="ECO:0007669"/>
    <property type="project" value="UniProtKB-SubCell"/>
</dbReference>
<dbReference type="GO" id="GO:0005524">
    <property type="term" value="F:ATP binding"/>
    <property type="evidence" value="ECO:0007669"/>
    <property type="project" value="UniProtKB-UniRule"/>
</dbReference>
<dbReference type="GO" id="GO:0046933">
    <property type="term" value="F:proton-transporting ATP synthase activity, rotational mechanism"/>
    <property type="evidence" value="ECO:0007669"/>
    <property type="project" value="UniProtKB-UniRule"/>
</dbReference>
<dbReference type="GO" id="GO:0046961">
    <property type="term" value="F:proton-transporting ATPase activity, rotational mechanism"/>
    <property type="evidence" value="ECO:0007669"/>
    <property type="project" value="InterPro"/>
</dbReference>
<dbReference type="GO" id="GO:0042777">
    <property type="term" value="P:proton motive force-driven plasma membrane ATP synthesis"/>
    <property type="evidence" value="ECO:0007669"/>
    <property type="project" value="UniProtKB-UniRule"/>
</dbReference>
<dbReference type="FunFam" id="1.10.287.3240:FF:000007">
    <property type="entry name" value="V-type ATP synthase subunit D"/>
    <property type="match status" value="1"/>
</dbReference>
<dbReference type="Gene3D" id="1.10.287.3240">
    <property type="match status" value="1"/>
</dbReference>
<dbReference type="HAMAP" id="MF_00271">
    <property type="entry name" value="ATP_synth_D_arch"/>
    <property type="match status" value="1"/>
</dbReference>
<dbReference type="InterPro" id="IPR002699">
    <property type="entry name" value="V_ATPase_D"/>
</dbReference>
<dbReference type="NCBIfam" id="NF001545">
    <property type="entry name" value="PRK00373.1-4"/>
    <property type="match status" value="1"/>
</dbReference>
<dbReference type="NCBIfam" id="TIGR00309">
    <property type="entry name" value="V_ATPase_subD"/>
    <property type="match status" value="1"/>
</dbReference>
<dbReference type="PANTHER" id="PTHR11671">
    <property type="entry name" value="V-TYPE ATP SYNTHASE SUBUNIT D"/>
    <property type="match status" value="1"/>
</dbReference>
<dbReference type="Pfam" id="PF01813">
    <property type="entry name" value="ATP-synt_D"/>
    <property type="match status" value="1"/>
</dbReference>
<name>AATD_DESSY</name>
<comment type="function">
    <text evidence="1">Component of the A-type ATP synthase that produces ATP from ADP in the presence of a proton gradient across the membrane.</text>
</comment>
<comment type="subunit">
    <text evidence="1">Has multiple subunits with at least A(3), B(3), C, D, E, F, H, I and proteolipid K(x).</text>
</comment>
<comment type="subcellular location">
    <subcellularLocation>
        <location evidence="1">Cell membrane</location>
        <topology evidence="1">Peripheral membrane protein</topology>
    </subcellularLocation>
</comment>
<comment type="similarity">
    <text evidence="1">Belongs to the V-ATPase D subunit family.</text>
</comment>
<sequence length="214" mass="24897">MAELLNVKPTRMELLNLKRRIQLAKKGHKLLKDKQDALVMEFFTIYDEALQLRRELNLKMKEAFEALQMAEIDVGTLRLKEISLSVKPNREVEIRKRNVMAVPVPLIEAESFKRNAGERGYAFVSSSAKVDLVAEKFEEVLDLAVRLAEVEETLKRLAREIEVTKRRVNALEYIIIPRMEATVKFIKQRLDEMERENFFRLKRVKALIEARGGS</sequence>
<evidence type="ECO:0000255" key="1">
    <source>
        <dbReference type="HAMAP-Rule" id="MF_00271"/>
    </source>
</evidence>
<evidence type="ECO:0000303" key="2">
    <source>
    </source>
</evidence>
<keyword id="KW-0066">ATP synthesis</keyword>
<keyword id="KW-1003">Cell membrane</keyword>
<keyword id="KW-0375">Hydrogen ion transport</keyword>
<keyword id="KW-0406">Ion transport</keyword>
<keyword id="KW-0472">Membrane</keyword>
<keyword id="KW-0813">Transport</keyword>
<accession>O06506</accession>
<organism>
    <name type="scientific">Desulfurococcus sp. (strain SY)</name>
    <dbReference type="NCBI Taxonomy" id="59822"/>
    <lineage>
        <taxon>Archaea</taxon>
        <taxon>Thermoproteota</taxon>
        <taxon>Thermoprotei</taxon>
        <taxon>Desulfurococcales</taxon>
        <taxon>Desulfurococcaceae</taxon>
        <taxon>Desulfurococcus</taxon>
    </lineage>
</organism>
<protein>
    <recommendedName>
        <fullName evidence="1">A-type ATP synthase subunit D</fullName>
    </recommendedName>
    <alternativeName>
        <fullName evidence="2">V-ATPase subunit D</fullName>
    </alternativeName>
</protein>
<proteinExistence type="inferred from homology"/>